<comment type="function">
    <text evidence="1">Component of the cleavage factor Im (CFIm) complex that functions as an activator of the pre-mRNA 3'-end cleavage and polyadenylation processing required for the maturation of pre-mRNA into functional mRNAs. CFIm contributes to the recruitment of multiprotein complexes on specific sequences on the pre-mRNA 3'-end, so called cleavage and polyadenylation signals (pA signals). Most pre-mRNAs contain multiple pA signals, resulting in alternative cleavage and polyadenylation (APA) producing mRNAs with variable 3'-end formation. The CFIm complex acts as a key regulator of cleavage and polyadenylation site choice during APA through its binding to 5'-UGUA-3' elements localized in the 3'-untranslated region (UTR) for a huge number of pre-mRNAs. Plays a role in mRNA export.</text>
</comment>
<comment type="subunit">
    <text evidence="1">Component of the cleavage factor Im (CFIm) complex.</text>
</comment>
<comment type="subcellular location">
    <subcellularLocation>
        <location evidence="1">Nucleus</location>
    </subcellularLocation>
    <subcellularLocation>
        <location evidence="1">Nucleus</location>
        <location evidence="1">Nucleoplasm</location>
    </subcellularLocation>
    <subcellularLocation>
        <location evidence="1">Nucleus speckle</location>
    </subcellularLocation>
    <subcellularLocation>
        <location evidence="1">Cytoplasm</location>
    </subcellularLocation>
    <text evidence="1">Shuttles between the nucleus and the cytoplasm.</text>
</comment>
<comment type="alternative products">
    <event type="alternative splicing"/>
    <isoform>
        <id>Q6NWC6-1</id>
        <name>1</name>
        <sequence type="displayed"/>
    </isoform>
    <isoform>
        <id>Q6NWC6-2</id>
        <name>2</name>
        <sequence type="described" ref="VSP_017193"/>
    </isoform>
</comment>
<comment type="similarity">
    <text evidence="5">Belongs to the RRM CPSF6/7 family.</text>
</comment>
<dbReference type="EMBL" id="AY398330">
    <property type="protein sequence ID" value="AAQ97763.1"/>
    <property type="molecule type" value="mRNA"/>
</dbReference>
<dbReference type="EMBL" id="BC067642">
    <property type="protein sequence ID" value="AAH67642.1"/>
    <property type="molecule type" value="mRNA"/>
</dbReference>
<dbReference type="RefSeq" id="NP_001017993.1">
    <molecule id="Q6NWC6-2"/>
    <property type="nucleotide sequence ID" value="NM_001017993.1"/>
</dbReference>
<dbReference type="RefSeq" id="XP_005164510.1">
    <molecule id="Q6NWC6-1"/>
    <property type="nucleotide sequence ID" value="XM_005164453.5"/>
</dbReference>
<dbReference type="SMR" id="Q6NWC6"/>
<dbReference type="FunCoup" id="Q6NWC6">
    <property type="interactions" value="3504"/>
</dbReference>
<dbReference type="STRING" id="7955.ENSDARP00000076726"/>
<dbReference type="PaxDb" id="7955-ENSDARP00000076726"/>
<dbReference type="Ensembl" id="ENSDART00000129521">
    <molecule id="Q6NWC6-1"/>
    <property type="protein sequence ID" value="ENSDARP00000110285"/>
    <property type="gene ID" value="ENSDARG00000018618"/>
</dbReference>
<dbReference type="GeneID" id="327069"/>
<dbReference type="KEGG" id="dre:327069"/>
<dbReference type="AGR" id="ZFIN:ZDB-GENE-030131-5277"/>
<dbReference type="CTD" id="11052"/>
<dbReference type="ZFIN" id="ZDB-GENE-030131-5277">
    <property type="gene designation" value="cpsf6"/>
</dbReference>
<dbReference type="eggNOG" id="KOG4849">
    <property type="taxonomic scope" value="Eukaryota"/>
</dbReference>
<dbReference type="HOGENOM" id="CLU_025289_1_0_1"/>
<dbReference type="InParanoid" id="Q6NWC6"/>
<dbReference type="OrthoDB" id="10065185at2759"/>
<dbReference type="PhylomeDB" id="Q6NWC6"/>
<dbReference type="TreeFam" id="TF316430"/>
<dbReference type="PRO" id="PR:Q6NWC6"/>
<dbReference type="Proteomes" id="UP000000437">
    <property type="component" value="Chromosome 4"/>
</dbReference>
<dbReference type="Bgee" id="ENSDARG00000018618">
    <property type="expression patterns" value="Expressed in early embryo and 34 other cell types or tissues"/>
</dbReference>
<dbReference type="ExpressionAtlas" id="Q6NWC6">
    <property type="expression patterns" value="baseline"/>
</dbReference>
<dbReference type="GO" id="GO:0005737">
    <property type="term" value="C:cytoplasm"/>
    <property type="evidence" value="ECO:0000250"/>
    <property type="project" value="UniProtKB"/>
</dbReference>
<dbReference type="GO" id="GO:0035061">
    <property type="term" value="C:interchromatin granule"/>
    <property type="evidence" value="ECO:0000250"/>
    <property type="project" value="UniProtKB"/>
</dbReference>
<dbReference type="GO" id="GO:0005847">
    <property type="term" value="C:mRNA cleavage and polyadenylation specificity factor complex"/>
    <property type="evidence" value="ECO:0000318"/>
    <property type="project" value="GO_Central"/>
</dbReference>
<dbReference type="GO" id="GO:0005849">
    <property type="term" value="C:mRNA cleavage factor complex"/>
    <property type="evidence" value="ECO:0000250"/>
    <property type="project" value="UniProtKB"/>
</dbReference>
<dbReference type="GO" id="GO:0016607">
    <property type="term" value="C:nuclear speck"/>
    <property type="evidence" value="ECO:0000250"/>
    <property type="project" value="UniProtKB"/>
</dbReference>
<dbReference type="GO" id="GO:0005654">
    <property type="term" value="C:nucleoplasm"/>
    <property type="evidence" value="ECO:0000250"/>
    <property type="project" value="UniProtKB"/>
</dbReference>
<dbReference type="GO" id="GO:0005634">
    <property type="term" value="C:nucleus"/>
    <property type="evidence" value="ECO:0000250"/>
    <property type="project" value="UniProtKB"/>
</dbReference>
<dbReference type="GO" id="GO:0042382">
    <property type="term" value="C:paraspeckles"/>
    <property type="evidence" value="ECO:0000314"/>
    <property type="project" value="ZFIN"/>
</dbReference>
<dbReference type="GO" id="GO:0005726">
    <property type="term" value="C:perichromatin fibrils"/>
    <property type="evidence" value="ECO:0000250"/>
    <property type="project" value="UniProtKB"/>
</dbReference>
<dbReference type="GO" id="GO:0003729">
    <property type="term" value="F:mRNA binding"/>
    <property type="evidence" value="ECO:0000250"/>
    <property type="project" value="UniProtKB"/>
</dbReference>
<dbReference type="GO" id="GO:0180010">
    <property type="term" value="P:co-transcriptional mRNA 3'-end processing, cleavage and polyadenylation pathway"/>
    <property type="evidence" value="ECO:0000250"/>
    <property type="project" value="UniProtKB"/>
</dbReference>
<dbReference type="GO" id="GO:0110104">
    <property type="term" value="P:mRNA alternative polyadenylation"/>
    <property type="evidence" value="ECO:0000250"/>
    <property type="project" value="UniProtKB"/>
</dbReference>
<dbReference type="GO" id="GO:0046833">
    <property type="term" value="P:positive regulation of RNA export from nucleus"/>
    <property type="evidence" value="ECO:0000250"/>
    <property type="project" value="UniProtKB"/>
</dbReference>
<dbReference type="GO" id="GO:0051290">
    <property type="term" value="P:protein heterotetramerization"/>
    <property type="evidence" value="ECO:0000250"/>
    <property type="project" value="UniProtKB"/>
</dbReference>
<dbReference type="CDD" id="cd12643">
    <property type="entry name" value="RRM_CFIm68"/>
    <property type="match status" value="1"/>
</dbReference>
<dbReference type="FunFam" id="3.30.70.330:FF:000081">
    <property type="entry name" value="Cleavage and polyadenylation specificity factor subunit 6"/>
    <property type="match status" value="1"/>
</dbReference>
<dbReference type="Gene3D" id="3.30.70.330">
    <property type="match status" value="1"/>
</dbReference>
<dbReference type="InterPro" id="IPR034772">
    <property type="entry name" value="CPSF6/7"/>
</dbReference>
<dbReference type="InterPro" id="IPR034769">
    <property type="entry name" value="CPSF6_RRM"/>
</dbReference>
<dbReference type="InterPro" id="IPR012677">
    <property type="entry name" value="Nucleotide-bd_a/b_plait_sf"/>
</dbReference>
<dbReference type="InterPro" id="IPR035979">
    <property type="entry name" value="RBD_domain_sf"/>
</dbReference>
<dbReference type="InterPro" id="IPR000504">
    <property type="entry name" value="RRM_dom"/>
</dbReference>
<dbReference type="PANTHER" id="PTHR23204">
    <property type="entry name" value="CLEAVAGE AND POLYADENYLATION SPECIFIC FACTOR"/>
    <property type="match status" value="1"/>
</dbReference>
<dbReference type="Pfam" id="PF00076">
    <property type="entry name" value="RRM_1"/>
    <property type="match status" value="1"/>
</dbReference>
<dbReference type="PRINTS" id="PR01217">
    <property type="entry name" value="PRICHEXTENSN"/>
</dbReference>
<dbReference type="SMART" id="SM00360">
    <property type="entry name" value="RRM"/>
    <property type="match status" value="1"/>
</dbReference>
<dbReference type="SUPFAM" id="SSF54928">
    <property type="entry name" value="RNA-binding domain, RBD"/>
    <property type="match status" value="1"/>
</dbReference>
<dbReference type="PROSITE" id="PS50102">
    <property type="entry name" value="RRM"/>
    <property type="match status" value="1"/>
</dbReference>
<evidence type="ECO:0000250" key="1">
    <source>
        <dbReference type="UniProtKB" id="Q16630"/>
    </source>
</evidence>
<evidence type="ECO:0000255" key="2">
    <source>
        <dbReference type="PROSITE-ProRule" id="PRU00176"/>
    </source>
</evidence>
<evidence type="ECO:0000256" key="3">
    <source>
        <dbReference type="SAM" id="MobiDB-lite"/>
    </source>
</evidence>
<evidence type="ECO:0000303" key="4">
    <source>
    </source>
</evidence>
<evidence type="ECO:0000305" key="5"/>
<accession>Q6NWC6</accession>
<accession>Q6TH26</accession>
<feature type="chain" id="PRO_0000081525" description="Cleavage and polyadenylation specificity factor subunit 6">
    <location>
        <begin position="1"/>
        <end position="545"/>
    </location>
</feature>
<feature type="domain" description="RRM" evidence="2">
    <location>
        <begin position="81"/>
        <end position="161"/>
    </location>
</feature>
<feature type="region of interest" description="Disordered" evidence="3">
    <location>
        <begin position="37"/>
        <end position="69"/>
    </location>
</feature>
<feature type="region of interest" description="Disordered" evidence="3">
    <location>
        <begin position="165"/>
        <end position="404"/>
    </location>
</feature>
<feature type="region of interest" description="Disordered" evidence="3">
    <location>
        <begin position="478"/>
        <end position="545"/>
    </location>
</feature>
<feature type="compositionally biased region" description="Polar residues" evidence="3">
    <location>
        <begin position="165"/>
        <end position="180"/>
    </location>
</feature>
<feature type="compositionally biased region" description="Gly residues" evidence="3">
    <location>
        <begin position="184"/>
        <end position="200"/>
    </location>
</feature>
<feature type="compositionally biased region" description="Pro residues" evidence="3">
    <location>
        <begin position="220"/>
        <end position="230"/>
    </location>
</feature>
<feature type="compositionally biased region" description="Pro residues" evidence="3">
    <location>
        <begin position="237"/>
        <end position="265"/>
    </location>
</feature>
<feature type="compositionally biased region" description="Pro residues" evidence="3">
    <location>
        <begin position="287"/>
        <end position="363"/>
    </location>
</feature>
<feature type="compositionally biased region" description="Pro residues" evidence="3">
    <location>
        <begin position="372"/>
        <end position="383"/>
    </location>
</feature>
<feature type="compositionally biased region" description="Basic and acidic residues" evidence="3">
    <location>
        <begin position="384"/>
        <end position="397"/>
    </location>
</feature>
<feature type="compositionally biased region" description="Basic and acidic residues" evidence="3">
    <location>
        <begin position="483"/>
        <end position="497"/>
    </location>
</feature>
<feature type="compositionally biased region" description="Basic residues" evidence="3">
    <location>
        <begin position="498"/>
        <end position="508"/>
    </location>
</feature>
<feature type="compositionally biased region" description="Basic and acidic residues" evidence="3">
    <location>
        <begin position="509"/>
        <end position="545"/>
    </location>
</feature>
<feature type="splice variant" id="VSP_017193" description="In isoform 2." evidence="4">
    <original>S</original>
    <variation>SERRGFDNSHYHKG</variation>
    <location>
        <position position="174"/>
    </location>
</feature>
<protein>
    <recommendedName>
        <fullName evidence="1">Cleavage and polyadenylation specificity factor subunit 6</fullName>
    </recommendedName>
</protein>
<organism>
    <name type="scientific">Danio rerio</name>
    <name type="common">Zebrafish</name>
    <name type="synonym">Brachydanio rerio</name>
    <dbReference type="NCBI Taxonomy" id="7955"/>
    <lineage>
        <taxon>Eukaryota</taxon>
        <taxon>Metazoa</taxon>
        <taxon>Chordata</taxon>
        <taxon>Craniata</taxon>
        <taxon>Vertebrata</taxon>
        <taxon>Euteleostomi</taxon>
        <taxon>Actinopterygii</taxon>
        <taxon>Neopterygii</taxon>
        <taxon>Teleostei</taxon>
        <taxon>Ostariophysi</taxon>
        <taxon>Cypriniformes</taxon>
        <taxon>Danionidae</taxon>
        <taxon>Danioninae</taxon>
        <taxon>Danio</taxon>
    </lineage>
</organism>
<keyword id="KW-0025">Alternative splicing</keyword>
<keyword id="KW-0963">Cytoplasm</keyword>
<keyword id="KW-0507">mRNA processing</keyword>
<keyword id="KW-0539">Nucleus</keyword>
<keyword id="KW-1185">Reference proteome</keyword>
<name>CPSF6_DANRE</name>
<reference key="1">
    <citation type="journal article" date="2004" name="Proc. Natl. Acad. Sci. U.S.A.">
        <title>Hematopoietic gene expression profile in zebrafish kidney marrow.</title>
        <authorList>
            <person name="Song H.-D."/>
            <person name="Sun X.-J."/>
            <person name="Deng M."/>
            <person name="Zhang G.-W."/>
            <person name="Zhou Y."/>
            <person name="Wu X.-Y."/>
            <person name="Sheng Y."/>
            <person name="Chen Y."/>
            <person name="Ruan Z."/>
            <person name="Jiang C.-L."/>
            <person name="Fan H.-Y."/>
            <person name="Zon L.I."/>
            <person name="Kanki J.P."/>
            <person name="Liu T.X."/>
            <person name="Look A.T."/>
            <person name="Chen Z."/>
        </authorList>
    </citation>
    <scope>NUCLEOTIDE SEQUENCE [LARGE SCALE MRNA] (ISOFORM 2)</scope>
    <source>
        <tissue>Kidney marrow</tissue>
    </source>
</reference>
<reference key="2">
    <citation type="submission" date="2004-03" db="EMBL/GenBank/DDBJ databases">
        <authorList>
            <consortium name="NIH - Zebrafish Gene Collection (ZGC) project"/>
        </authorList>
    </citation>
    <scope>NUCLEOTIDE SEQUENCE [LARGE SCALE MRNA] (ISOFORM 1)</scope>
    <source>
        <tissue>Embryo</tissue>
    </source>
</reference>
<sequence length="545" mass="58775">MADGVDHIDIYADVEEEFNQESDYPVHDQIDLYDDVISPSANNGDAPEDRDYLDSLPAPGGNEGSKGAPANVVYTYNGKRIALYIGNLTWWTTDEDLTDAIRSIGINDVLEIKFFENRANGQSKGFALVCVGSDSSSRKLMDLLSKRELHGQNPIVTPCNKQSLSQFEMQSRKSTQSGQMSGEGKAGPPGSGSRGGGFPPGKGQRRFPGPPGQGDRFPGPVGPGGPPPHFPGMQGPPRLPSGPPGPLGPPGPPPPGQGLPPPLGGPPNRGDRPPPPVLFPGQFGQPPMGPMPPGPPPPGYGPPPGPPPPQQGPPPPGPFPPRPPGPLGPPLGLAPPPHMQGPPPGGPPPAPHVNPAFFPPPGNNMPSSDGRGPPPGDPYGRPPPYDRDFPGGRDMDASRTPLSEAEFEEIMNRNRAISSSAISRAVSDASAADYGSAIETLVTAISLIKQSKVSADDRCKVLISSLQDCLHGIESKSYGSVAGRRERSRERDHSRSREKSRRHKSRSRDRHEDYYRERSRERDRHRERDRDRERDREREREYRHR</sequence>
<proteinExistence type="evidence at transcript level"/>
<gene>
    <name evidence="1" type="primary">cpsf6</name>
</gene>